<protein>
    <recommendedName>
        <fullName evidence="1">ATP-dependent Clp protease adapter protein ClpS</fullName>
    </recommendedName>
</protein>
<evidence type="ECO:0000255" key="1">
    <source>
        <dbReference type="HAMAP-Rule" id="MF_00302"/>
    </source>
</evidence>
<comment type="function">
    <text evidence="1">Involved in the modulation of the specificity of the ClpAP-mediated ATP-dependent protein degradation.</text>
</comment>
<comment type="subunit">
    <text evidence="1">Binds to the N-terminal domain of the chaperone ClpA.</text>
</comment>
<comment type="similarity">
    <text evidence="1">Belongs to the ClpS family.</text>
</comment>
<dbReference type="EMBL" id="CP000447">
    <property type="protein sequence ID" value="ABI72101.1"/>
    <property type="molecule type" value="Genomic_DNA"/>
</dbReference>
<dbReference type="RefSeq" id="WP_011637710.1">
    <property type="nucleotide sequence ID" value="NC_008345.1"/>
</dbReference>
<dbReference type="SMR" id="Q081G4"/>
<dbReference type="STRING" id="318167.Sfri_2255"/>
<dbReference type="KEGG" id="sfr:Sfri_2255"/>
<dbReference type="eggNOG" id="COG2127">
    <property type="taxonomic scope" value="Bacteria"/>
</dbReference>
<dbReference type="HOGENOM" id="CLU_134358_2_1_6"/>
<dbReference type="OrthoDB" id="9796121at2"/>
<dbReference type="Proteomes" id="UP000000684">
    <property type="component" value="Chromosome"/>
</dbReference>
<dbReference type="GO" id="GO:0030163">
    <property type="term" value="P:protein catabolic process"/>
    <property type="evidence" value="ECO:0007669"/>
    <property type="project" value="InterPro"/>
</dbReference>
<dbReference type="GO" id="GO:0006508">
    <property type="term" value="P:proteolysis"/>
    <property type="evidence" value="ECO:0007669"/>
    <property type="project" value="UniProtKB-UniRule"/>
</dbReference>
<dbReference type="FunFam" id="3.30.1390.10:FF:000002">
    <property type="entry name" value="ATP-dependent Clp protease adapter protein ClpS"/>
    <property type="match status" value="1"/>
</dbReference>
<dbReference type="Gene3D" id="3.30.1390.10">
    <property type="match status" value="1"/>
</dbReference>
<dbReference type="HAMAP" id="MF_00302">
    <property type="entry name" value="ClpS"/>
    <property type="match status" value="1"/>
</dbReference>
<dbReference type="InterPro" id="IPR022935">
    <property type="entry name" value="ClpS"/>
</dbReference>
<dbReference type="InterPro" id="IPR003769">
    <property type="entry name" value="ClpS_core"/>
</dbReference>
<dbReference type="InterPro" id="IPR014719">
    <property type="entry name" value="Ribosomal_bL12_C/ClpS-like"/>
</dbReference>
<dbReference type="NCBIfam" id="NF000670">
    <property type="entry name" value="PRK00033.1-3"/>
    <property type="match status" value="1"/>
</dbReference>
<dbReference type="NCBIfam" id="NF000672">
    <property type="entry name" value="PRK00033.1-5"/>
    <property type="match status" value="1"/>
</dbReference>
<dbReference type="PANTHER" id="PTHR33473:SF19">
    <property type="entry name" value="ATP-DEPENDENT CLP PROTEASE ADAPTER PROTEIN CLPS"/>
    <property type="match status" value="1"/>
</dbReference>
<dbReference type="PANTHER" id="PTHR33473">
    <property type="entry name" value="ATP-DEPENDENT CLP PROTEASE ADAPTER PROTEIN CLPS1, CHLOROPLASTIC"/>
    <property type="match status" value="1"/>
</dbReference>
<dbReference type="Pfam" id="PF02617">
    <property type="entry name" value="ClpS"/>
    <property type="match status" value="1"/>
</dbReference>
<dbReference type="SUPFAM" id="SSF54736">
    <property type="entry name" value="ClpS-like"/>
    <property type="match status" value="1"/>
</dbReference>
<sequence length="102" mass="11746">MAKLGNVEHIEEKVESELQPPHMYKVVLNNDDYTPMDFVVEVLQRFFEKNEQQAVDIMLAIHNQGKGLCGVFPFGIAETKVFQVNQFARENQHPLLCTLEKV</sequence>
<proteinExistence type="inferred from homology"/>
<feature type="chain" id="PRO_1000022625" description="ATP-dependent Clp protease adapter protein ClpS">
    <location>
        <begin position="1"/>
        <end position="102"/>
    </location>
</feature>
<accession>Q081G4</accession>
<keyword id="KW-1185">Reference proteome</keyword>
<name>CLPS_SHEFN</name>
<reference key="1">
    <citation type="submission" date="2006-08" db="EMBL/GenBank/DDBJ databases">
        <title>Complete sequence of Shewanella frigidimarina NCIMB 400.</title>
        <authorList>
            <consortium name="US DOE Joint Genome Institute"/>
            <person name="Copeland A."/>
            <person name="Lucas S."/>
            <person name="Lapidus A."/>
            <person name="Barry K."/>
            <person name="Detter J.C."/>
            <person name="Glavina del Rio T."/>
            <person name="Hammon N."/>
            <person name="Israni S."/>
            <person name="Dalin E."/>
            <person name="Tice H."/>
            <person name="Pitluck S."/>
            <person name="Fredrickson J.K."/>
            <person name="Kolker E."/>
            <person name="McCuel L.A."/>
            <person name="DiChristina T."/>
            <person name="Nealson K.H."/>
            <person name="Newman D."/>
            <person name="Tiedje J.M."/>
            <person name="Zhou J."/>
            <person name="Romine M.F."/>
            <person name="Culley D.E."/>
            <person name="Serres M."/>
            <person name="Chertkov O."/>
            <person name="Brettin T."/>
            <person name="Bruce D."/>
            <person name="Han C."/>
            <person name="Tapia R."/>
            <person name="Gilna P."/>
            <person name="Schmutz J."/>
            <person name="Larimer F."/>
            <person name="Land M."/>
            <person name="Hauser L."/>
            <person name="Kyrpides N."/>
            <person name="Mikhailova N."/>
            <person name="Richardson P."/>
        </authorList>
    </citation>
    <scope>NUCLEOTIDE SEQUENCE [LARGE SCALE GENOMIC DNA]</scope>
    <source>
        <strain>NCIMB 400</strain>
    </source>
</reference>
<gene>
    <name evidence="1" type="primary">clpS</name>
    <name type="ordered locus">Sfri_2255</name>
</gene>
<organism>
    <name type="scientific">Shewanella frigidimarina (strain NCIMB 400)</name>
    <dbReference type="NCBI Taxonomy" id="318167"/>
    <lineage>
        <taxon>Bacteria</taxon>
        <taxon>Pseudomonadati</taxon>
        <taxon>Pseudomonadota</taxon>
        <taxon>Gammaproteobacteria</taxon>
        <taxon>Alteromonadales</taxon>
        <taxon>Shewanellaceae</taxon>
        <taxon>Shewanella</taxon>
    </lineage>
</organism>